<name>COMD_HAEIN</name>
<gene>
    <name type="primary">comD</name>
    <name type="ordered locus">HI_0436</name>
</gene>
<comment type="function">
    <text>Involved in transformation (genetic competence for DNA uptake).</text>
</comment>
<proteinExistence type="predicted"/>
<accession>P31771</accession>
<dbReference type="EMBL" id="M62809">
    <property type="protein sequence ID" value="AAA25011.1"/>
    <property type="molecule type" value="Genomic_DNA"/>
</dbReference>
<dbReference type="EMBL" id="L42023">
    <property type="protein sequence ID" value="AAC22095.1"/>
    <property type="molecule type" value="Genomic_DNA"/>
</dbReference>
<dbReference type="PIR" id="I64067">
    <property type="entry name" value="JH0433"/>
</dbReference>
<dbReference type="RefSeq" id="NP_438597.1">
    <property type="nucleotide sequence ID" value="NC_000907.1"/>
</dbReference>
<dbReference type="SMR" id="P31771"/>
<dbReference type="STRING" id="71421.HI_0436"/>
<dbReference type="EnsemblBacteria" id="AAC22095">
    <property type="protein sequence ID" value="AAC22095"/>
    <property type="gene ID" value="HI_0436"/>
</dbReference>
<dbReference type="KEGG" id="hin:HI_0436"/>
<dbReference type="PATRIC" id="fig|71421.8.peg.456"/>
<dbReference type="HOGENOM" id="CLU_1862360_0_0_6"/>
<dbReference type="OrthoDB" id="5683249at2"/>
<dbReference type="BioCyc" id="HINF71421:G1GJ1-451-MONOMER"/>
<dbReference type="Proteomes" id="UP000000579">
    <property type="component" value="Chromosome"/>
</dbReference>
<dbReference type="GO" id="GO:0030420">
    <property type="term" value="P:establishment of competence for transformation"/>
    <property type="evidence" value="ECO:0007669"/>
    <property type="project" value="UniProtKB-KW"/>
</dbReference>
<dbReference type="FunFam" id="2.30.30.830:FF:000006">
    <property type="entry name" value="Competence protein D"/>
    <property type="match status" value="1"/>
</dbReference>
<dbReference type="Gene3D" id="2.30.30.830">
    <property type="match status" value="1"/>
</dbReference>
<dbReference type="InterPro" id="IPR016506">
    <property type="entry name" value="ComD_Pasteurellaceae"/>
</dbReference>
<dbReference type="InterPro" id="IPR007446">
    <property type="entry name" value="PilP"/>
</dbReference>
<dbReference type="Pfam" id="PF04351">
    <property type="entry name" value="PilP"/>
    <property type="match status" value="1"/>
</dbReference>
<dbReference type="PIRSF" id="PIRSF007059">
    <property type="entry name" value="ComD"/>
    <property type="match status" value="1"/>
</dbReference>
<organism>
    <name type="scientific">Haemophilus influenzae (strain ATCC 51907 / DSM 11121 / KW20 / Rd)</name>
    <dbReference type="NCBI Taxonomy" id="71421"/>
    <lineage>
        <taxon>Bacteria</taxon>
        <taxon>Pseudomonadati</taxon>
        <taxon>Pseudomonadota</taxon>
        <taxon>Gammaproteobacteria</taxon>
        <taxon>Pasteurellales</taxon>
        <taxon>Pasteurellaceae</taxon>
        <taxon>Haemophilus</taxon>
    </lineage>
</organism>
<reference key="1">
    <citation type="journal article" date="1991" name="Gene">
        <title>Nucleotide sequence of a cluster of genes involved in the transformation of Haemophilus influenzae Rd.</title>
        <authorList>
            <person name="Tomb J.-F."/>
            <person name="El-Hajj H."/>
            <person name="Smith H.O."/>
        </authorList>
    </citation>
    <scope>NUCLEOTIDE SEQUENCE [GENOMIC DNA]</scope>
    <source>
        <strain>ATCC 51907 / DSM 11121 / KW20 / Rd</strain>
    </source>
</reference>
<reference key="2">
    <citation type="journal article" date="1995" name="Science">
        <title>Whole-genome random sequencing and assembly of Haemophilus influenzae Rd.</title>
        <authorList>
            <person name="Fleischmann R.D."/>
            <person name="Adams M.D."/>
            <person name="White O."/>
            <person name="Clayton R.A."/>
            <person name="Kirkness E.F."/>
            <person name="Kerlavage A.R."/>
            <person name="Bult C.J."/>
            <person name="Tomb J.-F."/>
            <person name="Dougherty B.A."/>
            <person name="Merrick J.M."/>
            <person name="McKenney K."/>
            <person name="Sutton G.G."/>
            <person name="FitzHugh W."/>
            <person name="Fields C.A."/>
            <person name="Gocayne J.D."/>
            <person name="Scott J.D."/>
            <person name="Shirley R."/>
            <person name="Liu L.-I."/>
            <person name="Glodek A."/>
            <person name="Kelley J.M."/>
            <person name="Weidman J.F."/>
            <person name="Phillips C.A."/>
            <person name="Spriggs T."/>
            <person name="Hedblom E."/>
            <person name="Cotton M.D."/>
            <person name="Utterback T.R."/>
            <person name="Hanna M.C."/>
            <person name="Nguyen D.T."/>
            <person name="Saudek D.M."/>
            <person name="Brandon R.C."/>
            <person name="Fine L.D."/>
            <person name="Fritchman J.L."/>
            <person name="Fuhrmann J.L."/>
            <person name="Geoghagen N.S.M."/>
            <person name="Gnehm C.L."/>
            <person name="McDonald L.A."/>
            <person name="Small K.V."/>
            <person name="Fraser C.M."/>
            <person name="Smith H.O."/>
            <person name="Venter J.C."/>
        </authorList>
    </citation>
    <scope>NUCLEOTIDE SEQUENCE [LARGE SCALE GENOMIC DNA]</scope>
    <source>
        <strain>ATCC 51907 / DSM 11121 / KW20 / Rd</strain>
    </source>
</reference>
<keyword id="KW-0178">Competence</keyword>
<keyword id="KW-1185">Reference proteome</keyword>
<sequence>MKHWFFLIILFFMNCSWGQDPFDKTQRNRSQFDNAQTVMEQTEIISSDVPNNLCGADENRQAAEIPLNALKLVGVVISKDKAFALLQDQGLQVYSVLEGVDVAQEGYIVEKINQNNVQFMRKLGEQCDSSEWKKLSF</sequence>
<feature type="chain" id="PRO_0000090007" description="Competence protein D">
    <location>
        <begin position="1"/>
        <end position="137"/>
    </location>
</feature>
<protein>
    <recommendedName>
        <fullName>Competence protein D</fullName>
    </recommendedName>
    <alternativeName>
        <fullName>DNA transformation protein ComD</fullName>
    </alternativeName>
</protein>